<organism>
    <name type="scientific">Rickettsia africae (strain ESF-5)</name>
    <dbReference type="NCBI Taxonomy" id="347255"/>
    <lineage>
        <taxon>Bacteria</taxon>
        <taxon>Pseudomonadati</taxon>
        <taxon>Pseudomonadota</taxon>
        <taxon>Alphaproteobacteria</taxon>
        <taxon>Rickettsiales</taxon>
        <taxon>Rickettsiaceae</taxon>
        <taxon>Rickettsieae</taxon>
        <taxon>Rickettsia</taxon>
        <taxon>spotted fever group</taxon>
    </lineage>
</organism>
<comment type="similarity">
    <text evidence="1">Belongs to the UPF0335 family.</text>
</comment>
<reference key="1">
    <citation type="journal article" date="2009" name="BMC Genomics">
        <title>Analysis of the Rickettsia africae genome reveals that virulence acquisition in Rickettsia species may be explained by genome reduction.</title>
        <authorList>
            <person name="Fournier P.-E."/>
            <person name="El Karkouri K."/>
            <person name="Leroy Q."/>
            <person name="Robert C."/>
            <person name="Giumelli B."/>
            <person name="Renesto P."/>
            <person name="Socolovschi C."/>
            <person name="Parola P."/>
            <person name="Audic S."/>
            <person name="Raoult D."/>
        </authorList>
    </citation>
    <scope>NUCLEOTIDE SEQUENCE [LARGE SCALE GENOMIC DNA]</scope>
    <source>
        <strain>ESF-5</strain>
    </source>
</reference>
<sequence length="78" mass="9029">MSEVVVKEQLEQYISKIERLEQEKADLSQEVKDIFQDASSHGFDVKAMKSILKLKKLDKDKLAEQDAMLELYRDTLGI</sequence>
<proteinExistence type="inferred from homology"/>
<protein>
    <recommendedName>
        <fullName evidence="1">UPF0335 protein RAF_ORF0142</fullName>
    </recommendedName>
</protein>
<evidence type="ECO:0000255" key="1">
    <source>
        <dbReference type="HAMAP-Rule" id="MF_00797"/>
    </source>
</evidence>
<accession>C3PME9</accession>
<dbReference type="EMBL" id="CP001612">
    <property type="protein sequence ID" value="ACP53109.1"/>
    <property type="molecule type" value="Genomic_DNA"/>
</dbReference>
<dbReference type="RefSeq" id="WP_004996682.1">
    <property type="nucleotide sequence ID" value="NC_012633.1"/>
</dbReference>
<dbReference type="SMR" id="C3PME9"/>
<dbReference type="KEGG" id="raf:RAF_ORF0142"/>
<dbReference type="HOGENOM" id="CLU_158651_4_0_5"/>
<dbReference type="Proteomes" id="UP000002305">
    <property type="component" value="Chromosome"/>
</dbReference>
<dbReference type="GO" id="GO:0003677">
    <property type="term" value="F:DNA binding"/>
    <property type="evidence" value="ECO:0007669"/>
    <property type="project" value="InterPro"/>
</dbReference>
<dbReference type="HAMAP" id="MF_00797">
    <property type="entry name" value="UPF0335"/>
    <property type="match status" value="1"/>
</dbReference>
<dbReference type="InterPro" id="IPR018753">
    <property type="entry name" value="GapR-like"/>
</dbReference>
<dbReference type="InterPro" id="IPR046367">
    <property type="entry name" value="GapR-like_DNA-bd"/>
</dbReference>
<dbReference type="NCBIfam" id="NF010247">
    <property type="entry name" value="PRK13694.1"/>
    <property type="match status" value="1"/>
</dbReference>
<dbReference type="Pfam" id="PF10073">
    <property type="entry name" value="GapR_DNA-bd"/>
    <property type="match status" value="1"/>
</dbReference>
<feature type="chain" id="PRO_1000212966" description="UPF0335 protein RAF_ORF0142">
    <location>
        <begin position="1"/>
        <end position="78"/>
    </location>
</feature>
<name>Y142_RICAE</name>
<gene>
    <name type="ordered locus">RAF_ORF0142</name>
</gene>